<keyword id="KW-0378">Hydrolase</keyword>
<keyword id="KW-1185">Reference proteome</keyword>
<protein>
    <recommendedName>
        <fullName>Acylphosphatase</fullName>
        <ecNumber>3.6.1.7</ecNumber>
    </recommendedName>
    <alternativeName>
        <fullName>Acylphosphate phosphohydrolase</fullName>
    </alternativeName>
</protein>
<comment type="catalytic activity">
    <reaction>
        <text>an acyl phosphate + H2O = a carboxylate + phosphate + H(+)</text>
        <dbReference type="Rhea" id="RHEA:14965"/>
        <dbReference type="ChEBI" id="CHEBI:15377"/>
        <dbReference type="ChEBI" id="CHEBI:15378"/>
        <dbReference type="ChEBI" id="CHEBI:29067"/>
        <dbReference type="ChEBI" id="CHEBI:43474"/>
        <dbReference type="ChEBI" id="CHEBI:59918"/>
        <dbReference type="EC" id="3.6.1.7"/>
    </reaction>
</comment>
<comment type="similarity">
    <text evidence="2">Belongs to the acylphosphatase family.</text>
</comment>
<comment type="sequence caution" evidence="2">
    <conflict type="erroneous initiation">
        <sequence resource="EMBL-CDS" id="CAM05245"/>
    </conflict>
</comment>
<feature type="chain" id="PRO_0000326793" description="Acylphosphatase">
    <location>
        <begin position="1"/>
        <end position="95"/>
    </location>
</feature>
<feature type="domain" description="Acylphosphatase-like" evidence="1">
    <location>
        <begin position="9"/>
        <end position="95"/>
    </location>
</feature>
<feature type="active site" evidence="1">
    <location>
        <position position="24"/>
    </location>
</feature>
<feature type="active site" evidence="1">
    <location>
        <position position="42"/>
    </location>
</feature>
<organism>
    <name type="scientific">Saccharopolyspora erythraea (strain ATCC 11635 / DSM 40517 / JCM 4748 / NBRC 13426 / NCIMB 8594 / NRRL 2338)</name>
    <dbReference type="NCBI Taxonomy" id="405948"/>
    <lineage>
        <taxon>Bacteria</taxon>
        <taxon>Bacillati</taxon>
        <taxon>Actinomycetota</taxon>
        <taxon>Actinomycetes</taxon>
        <taxon>Pseudonocardiales</taxon>
        <taxon>Pseudonocardiaceae</taxon>
        <taxon>Saccharopolyspora</taxon>
    </lineage>
</organism>
<evidence type="ECO:0000255" key="1">
    <source>
        <dbReference type="PROSITE-ProRule" id="PRU00520"/>
    </source>
</evidence>
<evidence type="ECO:0000305" key="2"/>
<sequence length="95" mass="10408">MVTDAQQARLTAWVHGRVQGVGFRWWTRARALELGLAGSATNLPGNRVEVVAEGPRESCERLLEALRSPDTPGDVDHVAEQWSEPKGGLTGFVER</sequence>
<proteinExistence type="inferred from homology"/>
<accession>A4FMH0</accession>
<dbReference type="EC" id="3.6.1.7"/>
<dbReference type="EMBL" id="AM420293">
    <property type="protein sequence ID" value="CAM05245.1"/>
    <property type="status" value="ALT_INIT"/>
    <property type="molecule type" value="Genomic_DNA"/>
</dbReference>
<dbReference type="SMR" id="A4FMH0"/>
<dbReference type="STRING" id="405948.SACE_6072"/>
<dbReference type="KEGG" id="sen:SACE_6072"/>
<dbReference type="eggNOG" id="COG1254">
    <property type="taxonomic scope" value="Bacteria"/>
</dbReference>
<dbReference type="HOGENOM" id="CLU_141932_3_0_11"/>
<dbReference type="Proteomes" id="UP000006728">
    <property type="component" value="Chromosome"/>
</dbReference>
<dbReference type="GO" id="GO:0003998">
    <property type="term" value="F:acylphosphatase activity"/>
    <property type="evidence" value="ECO:0007669"/>
    <property type="project" value="UniProtKB-EC"/>
</dbReference>
<dbReference type="Gene3D" id="3.30.70.100">
    <property type="match status" value="1"/>
</dbReference>
<dbReference type="InterPro" id="IPR020456">
    <property type="entry name" value="Acylphosphatase"/>
</dbReference>
<dbReference type="InterPro" id="IPR001792">
    <property type="entry name" value="Acylphosphatase-like_dom"/>
</dbReference>
<dbReference type="InterPro" id="IPR036046">
    <property type="entry name" value="Acylphosphatase-like_dom_sf"/>
</dbReference>
<dbReference type="InterPro" id="IPR017968">
    <property type="entry name" value="Acylphosphatase_CS"/>
</dbReference>
<dbReference type="NCBIfam" id="NF010997">
    <property type="entry name" value="PRK14422.1"/>
    <property type="match status" value="1"/>
</dbReference>
<dbReference type="PANTHER" id="PTHR47268">
    <property type="entry name" value="ACYLPHOSPHATASE"/>
    <property type="match status" value="1"/>
</dbReference>
<dbReference type="PANTHER" id="PTHR47268:SF4">
    <property type="entry name" value="ACYLPHOSPHATASE"/>
    <property type="match status" value="1"/>
</dbReference>
<dbReference type="Pfam" id="PF00708">
    <property type="entry name" value="Acylphosphatase"/>
    <property type="match status" value="1"/>
</dbReference>
<dbReference type="SUPFAM" id="SSF54975">
    <property type="entry name" value="Acylphosphatase/BLUF domain-like"/>
    <property type="match status" value="1"/>
</dbReference>
<dbReference type="PROSITE" id="PS00150">
    <property type="entry name" value="ACYLPHOSPHATASE_1"/>
    <property type="match status" value="1"/>
</dbReference>
<dbReference type="PROSITE" id="PS51160">
    <property type="entry name" value="ACYLPHOSPHATASE_3"/>
    <property type="match status" value="1"/>
</dbReference>
<gene>
    <name type="primary">acyP</name>
    <name type="ordered locus">SACE_6072</name>
</gene>
<name>ACYP_SACEN</name>
<reference key="1">
    <citation type="journal article" date="2007" name="Nat. Biotechnol.">
        <title>Complete genome sequence of the erythromycin-producing bacterium Saccharopolyspora erythraea NRRL23338.</title>
        <authorList>
            <person name="Oliynyk M."/>
            <person name="Samborskyy M."/>
            <person name="Lester J.B."/>
            <person name="Mironenko T."/>
            <person name="Scott N."/>
            <person name="Dickens S."/>
            <person name="Haydock S.F."/>
            <person name="Leadlay P.F."/>
        </authorList>
    </citation>
    <scope>NUCLEOTIDE SEQUENCE [LARGE SCALE GENOMIC DNA]</scope>
    <source>
        <strain>ATCC 11635 / DSM 40517 / JCM 4748 / NBRC 13426 / NCIMB 8594 / NRRL 2338</strain>
    </source>
</reference>